<keyword id="KW-1003">Cell membrane</keyword>
<keyword id="KW-0472">Membrane</keyword>
<keyword id="KW-0520">NAD</keyword>
<keyword id="KW-0874">Quinone</keyword>
<keyword id="KW-1278">Translocase</keyword>
<keyword id="KW-0813">Transport</keyword>
<sequence>MTTDAELRELTVGTGAGGEQLGTDMVLNIGPQHPSTHGVLRLRLVLDGERVVSAEPIVGYMHRGAEKLFEVRDYRQIIVLANRHDWLSAFANELGVVLAVERLMGMEVPERATWLRMALAELNRVLNHLMFLGSYPLEIGAITPMFYAFRERETLQAVLEEVSGGRIHYMFNRVGGLKEEVPAGWTGRARTAIGEVRRRMPDLDRLIRRNEIFLARTVGVGVLSAAQAAAFGASGPVARASGLDLDLRRDEPYLAYDQLEVPVVTRTAGDCHSRFEVLLDQVYVSLDLAEQCLDQVDRLTGPVNTRLPKVLKAPEGHTYAWTENPLGINGYYLVSRGEKTPWRLKLRTASYANVQALATLLPGCLVPDLIAILGSMFFVVGDIDK</sequence>
<gene>
    <name evidence="1" type="primary">nuoD2</name>
    <name type="ordered locus">Sare_4721</name>
</gene>
<organism>
    <name type="scientific">Salinispora arenicola (strain CNS-205)</name>
    <dbReference type="NCBI Taxonomy" id="391037"/>
    <lineage>
        <taxon>Bacteria</taxon>
        <taxon>Bacillati</taxon>
        <taxon>Actinomycetota</taxon>
        <taxon>Actinomycetes</taxon>
        <taxon>Micromonosporales</taxon>
        <taxon>Micromonosporaceae</taxon>
        <taxon>Salinispora</taxon>
    </lineage>
</organism>
<feature type="chain" id="PRO_0000357924" description="NADH-quinone oxidoreductase subunit D 2">
    <location>
        <begin position="1"/>
        <end position="385"/>
    </location>
</feature>
<comment type="function">
    <text evidence="1">NDH-1 shuttles electrons from NADH, via FMN and iron-sulfur (Fe-S) centers, to quinones in the respiratory chain. The immediate electron acceptor for the enzyme in this species is believed to be a menaquinone. Couples the redox reaction to proton translocation (for every two electrons transferred, four hydrogen ions are translocated across the cytoplasmic membrane), and thus conserves the redox energy in a proton gradient.</text>
</comment>
<comment type="catalytic activity">
    <reaction evidence="1">
        <text>a quinone + NADH + 5 H(+)(in) = a quinol + NAD(+) + 4 H(+)(out)</text>
        <dbReference type="Rhea" id="RHEA:57888"/>
        <dbReference type="ChEBI" id="CHEBI:15378"/>
        <dbReference type="ChEBI" id="CHEBI:24646"/>
        <dbReference type="ChEBI" id="CHEBI:57540"/>
        <dbReference type="ChEBI" id="CHEBI:57945"/>
        <dbReference type="ChEBI" id="CHEBI:132124"/>
    </reaction>
</comment>
<comment type="subunit">
    <text evidence="1">NDH-1 is composed of 14 different subunits. Subunits NuoB, C, D, E, F, and G constitute the peripheral sector of the complex.</text>
</comment>
<comment type="subcellular location">
    <subcellularLocation>
        <location evidence="1">Cell membrane</location>
        <topology evidence="1">Peripheral membrane protein</topology>
        <orientation evidence="1">Cytoplasmic side</orientation>
    </subcellularLocation>
</comment>
<comment type="similarity">
    <text evidence="1">Belongs to the complex I 49 kDa subunit family.</text>
</comment>
<proteinExistence type="inferred from homology"/>
<dbReference type="EC" id="7.1.1.-" evidence="1"/>
<dbReference type="EMBL" id="CP000850">
    <property type="protein sequence ID" value="ABW00475.1"/>
    <property type="molecule type" value="Genomic_DNA"/>
</dbReference>
<dbReference type="SMR" id="A8M8F6"/>
<dbReference type="STRING" id="391037.Sare_4721"/>
<dbReference type="KEGG" id="saq:Sare_4721"/>
<dbReference type="PATRIC" id="fig|391037.6.peg.4772"/>
<dbReference type="eggNOG" id="COG0649">
    <property type="taxonomic scope" value="Bacteria"/>
</dbReference>
<dbReference type="HOGENOM" id="CLU_015134_1_2_11"/>
<dbReference type="OrthoDB" id="9801496at2"/>
<dbReference type="GO" id="GO:0005886">
    <property type="term" value="C:plasma membrane"/>
    <property type="evidence" value="ECO:0007669"/>
    <property type="project" value="UniProtKB-SubCell"/>
</dbReference>
<dbReference type="GO" id="GO:0051287">
    <property type="term" value="F:NAD binding"/>
    <property type="evidence" value="ECO:0007669"/>
    <property type="project" value="InterPro"/>
</dbReference>
<dbReference type="GO" id="GO:0050136">
    <property type="term" value="F:NADH:ubiquinone reductase (non-electrogenic) activity"/>
    <property type="evidence" value="ECO:0007669"/>
    <property type="project" value="UniProtKB-UniRule"/>
</dbReference>
<dbReference type="GO" id="GO:0048038">
    <property type="term" value="F:quinone binding"/>
    <property type="evidence" value="ECO:0007669"/>
    <property type="project" value="UniProtKB-KW"/>
</dbReference>
<dbReference type="Gene3D" id="1.10.645.10">
    <property type="entry name" value="Cytochrome-c3 Hydrogenase, chain B"/>
    <property type="match status" value="1"/>
</dbReference>
<dbReference type="HAMAP" id="MF_01358">
    <property type="entry name" value="NDH1_NuoD"/>
    <property type="match status" value="1"/>
</dbReference>
<dbReference type="InterPro" id="IPR001135">
    <property type="entry name" value="NADH_Q_OxRdtase_suD"/>
</dbReference>
<dbReference type="InterPro" id="IPR014029">
    <property type="entry name" value="NADH_UbQ_OxRdtase_49kDa_CS"/>
</dbReference>
<dbReference type="InterPro" id="IPR022885">
    <property type="entry name" value="NDH1_su_D/H"/>
</dbReference>
<dbReference type="InterPro" id="IPR029014">
    <property type="entry name" value="NiFe-Hase_large"/>
</dbReference>
<dbReference type="PANTHER" id="PTHR11993:SF10">
    <property type="entry name" value="NADH DEHYDROGENASE [UBIQUINONE] IRON-SULFUR PROTEIN 2, MITOCHONDRIAL"/>
    <property type="match status" value="1"/>
</dbReference>
<dbReference type="PANTHER" id="PTHR11993">
    <property type="entry name" value="NADH-UBIQUINONE OXIDOREDUCTASE 49 KDA SUBUNIT"/>
    <property type="match status" value="1"/>
</dbReference>
<dbReference type="Pfam" id="PF00346">
    <property type="entry name" value="Complex1_49kDa"/>
    <property type="match status" value="2"/>
</dbReference>
<dbReference type="SUPFAM" id="SSF56762">
    <property type="entry name" value="HydB/Nqo4-like"/>
    <property type="match status" value="1"/>
</dbReference>
<dbReference type="PROSITE" id="PS00535">
    <property type="entry name" value="COMPLEX1_49K"/>
    <property type="match status" value="1"/>
</dbReference>
<evidence type="ECO:0000255" key="1">
    <source>
        <dbReference type="HAMAP-Rule" id="MF_01358"/>
    </source>
</evidence>
<protein>
    <recommendedName>
        <fullName evidence="1">NADH-quinone oxidoreductase subunit D 2</fullName>
        <ecNumber evidence="1">7.1.1.-</ecNumber>
    </recommendedName>
    <alternativeName>
        <fullName evidence="1">NADH dehydrogenase I subunit D 2</fullName>
    </alternativeName>
    <alternativeName>
        <fullName evidence="1">NDH-1 subunit D 2</fullName>
    </alternativeName>
</protein>
<reference key="1">
    <citation type="submission" date="2007-10" db="EMBL/GenBank/DDBJ databases">
        <title>Complete sequence of Salinispora arenicola CNS-205.</title>
        <authorList>
            <consortium name="US DOE Joint Genome Institute"/>
            <person name="Copeland A."/>
            <person name="Lucas S."/>
            <person name="Lapidus A."/>
            <person name="Barry K."/>
            <person name="Glavina del Rio T."/>
            <person name="Dalin E."/>
            <person name="Tice H."/>
            <person name="Pitluck S."/>
            <person name="Foster B."/>
            <person name="Schmutz J."/>
            <person name="Larimer F."/>
            <person name="Land M."/>
            <person name="Hauser L."/>
            <person name="Kyrpides N."/>
            <person name="Ivanova N."/>
            <person name="Jensen P.R."/>
            <person name="Moore B.S."/>
            <person name="Penn K."/>
            <person name="Jenkins C."/>
            <person name="Udwary D."/>
            <person name="Xiang L."/>
            <person name="Gontang E."/>
            <person name="Richardson P."/>
        </authorList>
    </citation>
    <scope>NUCLEOTIDE SEQUENCE [LARGE SCALE GENOMIC DNA]</scope>
    <source>
        <strain>CNS-205</strain>
    </source>
</reference>
<accession>A8M8F6</accession>
<name>NUOD2_SALAI</name>